<reference key="1">
    <citation type="submission" date="2008-10" db="EMBL/GenBank/DDBJ databases">
        <title>Genome sequence of Bacillus cereus B4264.</title>
        <authorList>
            <person name="Dodson R.J."/>
            <person name="Durkin A.S."/>
            <person name="Rosovitz M.J."/>
            <person name="Rasko D.A."/>
            <person name="Hoffmaster A."/>
            <person name="Ravel J."/>
            <person name="Sutton G."/>
        </authorList>
    </citation>
    <scope>NUCLEOTIDE SEQUENCE [LARGE SCALE GENOMIC DNA]</scope>
    <source>
        <strain>B4264</strain>
    </source>
</reference>
<protein>
    <recommendedName>
        <fullName evidence="1">Isopentenyl-diphosphate delta-isomerase</fullName>
        <shortName evidence="1">IPP isomerase</shortName>
        <ecNumber evidence="1">5.3.3.2</ecNumber>
    </recommendedName>
    <alternativeName>
        <fullName evidence="1">Isopentenyl diphosphate:dimethylallyl diphosphate isomerase</fullName>
    </alternativeName>
    <alternativeName>
        <fullName evidence="1">Isopentenyl pyrophosphate isomerase</fullName>
    </alternativeName>
    <alternativeName>
        <fullName evidence="1">Type 2 isopentenyl diphosphate isomerase</fullName>
        <shortName evidence="1">IDI-2</shortName>
    </alternativeName>
</protein>
<keyword id="KW-0963">Cytoplasm</keyword>
<keyword id="KW-0285">Flavoprotein</keyword>
<keyword id="KW-0288">FMN</keyword>
<keyword id="KW-0413">Isomerase</keyword>
<keyword id="KW-0414">Isoprene biosynthesis</keyword>
<keyword id="KW-0460">Magnesium</keyword>
<keyword id="KW-0479">Metal-binding</keyword>
<keyword id="KW-0521">NADP</keyword>
<organism>
    <name type="scientific">Bacillus cereus (strain B4264)</name>
    <dbReference type="NCBI Taxonomy" id="405532"/>
    <lineage>
        <taxon>Bacteria</taxon>
        <taxon>Bacillati</taxon>
        <taxon>Bacillota</taxon>
        <taxon>Bacilli</taxon>
        <taxon>Bacillales</taxon>
        <taxon>Bacillaceae</taxon>
        <taxon>Bacillus</taxon>
        <taxon>Bacillus cereus group</taxon>
    </lineage>
</organism>
<dbReference type="EC" id="5.3.3.2" evidence="1"/>
<dbReference type="EMBL" id="CP001176">
    <property type="protein sequence ID" value="ACK63076.1"/>
    <property type="molecule type" value="Genomic_DNA"/>
</dbReference>
<dbReference type="RefSeq" id="WP_000251035.1">
    <property type="nucleotide sequence ID" value="NC_011725.1"/>
</dbReference>
<dbReference type="SMR" id="B7HHQ2"/>
<dbReference type="KEGG" id="bcb:BCB4264_A1554"/>
<dbReference type="HOGENOM" id="CLU_065515_0_0_9"/>
<dbReference type="Proteomes" id="UP000007096">
    <property type="component" value="Chromosome"/>
</dbReference>
<dbReference type="GO" id="GO:0005737">
    <property type="term" value="C:cytoplasm"/>
    <property type="evidence" value="ECO:0007669"/>
    <property type="project" value="UniProtKB-SubCell"/>
</dbReference>
<dbReference type="GO" id="GO:0010181">
    <property type="term" value="F:FMN binding"/>
    <property type="evidence" value="ECO:0007669"/>
    <property type="project" value="UniProtKB-UniRule"/>
</dbReference>
<dbReference type="GO" id="GO:0004452">
    <property type="term" value="F:isopentenyl-diphosphate delta-isomerase activity"/>
    <property type="evidence" value="ECO:0007669"/>
    <property type="project" value="UniProtKB-UniRule"/>
</dbReference>
<dbReference type="GO" id="GO:0000287">
    <property type="term" value="F:magnesium ion binding"/>
    <property type="evidence" value="ECO:0007669"/>
    <property type="project" value="UniProtKB-UniRule"/>
</dbReference>
<dbReference type="GO" id="GO:0070402">
    <property type="term" value="F:NADPH binding"/>
    <property type="evidence" value="ECO:0007669"/>
    <property type="project" value="UniProtKB-UniRule"/>
</dbReference>
<dbReference type="GO" id="GO:0016491">
    <property type="term" value="F:oxidoreductase activity"/>
    <property type="evidence" value="ECO:0007669"/>
    <property type="project" value="InterPro"/>
</dbReference>
<dbReference type="GO" id="GO:0008299">
    <property type="term" value="P:isoprenoid biosynthetic process"/>
    <property type="evidence" value="ECO:0007669"/>
    <property type="project" value="UniProtKB-UniRule"/>
</dbReference>
<dbReference type="CDD" id="cd02811">
    <property type="entry name" value="IDI-2_FMN"/>
    <property type="match status" value="1"/>
</dbReference>
<dbReference type="FunFam" id="3.20.20.70:FF:000115">
    <property type="entry name" value="Isopentenyl-diphosphate delta-isomerase"/>
    <property type="match status" value="1"/>
</dbReference>
<dbReference type="Gene3D" id="3.20.20.70">
    <property type="entry name" value="Aldolase class I"/>
    <property type="match status" value="1"/>
</dbReference>
<dbReference type="HAMAP" id="MF_00354">
    <property type="entry name" value="Idi_2"/>
    <property type="match status" value="1"/>
</dbReference>
<dbReference type="InterPro" id="IPR013785">
    <property type="entry name" value="Aldolase_TIM"/>
</dbReference>
<dbReference type="InterPro" id="IPR000262">
    <property type="entry name" value="FMN-dep_DH"/>
</dbReference>
<dbReference type="InterPro" id="IPR011179">
    <property type="entry name" value="IPdP_isomerase"/>
</dbReference>
<dbReference type="NCBIfam" id="TIGR02151">
    <property type="entry name" value="IPP_isom_2"/>
    <property type="match status" value="1"/>
</dbReference>
<dbReference type="PANTHER" id="PTHR43665">
    <property type="entry name" value="ISOPENTENYL-DIPHOSPHATE DELTA-ISOMERASE"/>
    <property type="match status" value="1"/>
</dbReference>
<dbReference type="PANTHER" id="PTHR43665:SF1">
    <property type="entry name" value="ISOPENTENYL-DIPHOSPHATE DELTA-ISOMERASE"/>
    <property type="match status" value="1"/>
</dbReference>
<dbReference type="Pfam" id="PF01070">
    <property type="entry name" value="FMN_dh"/>
    <property type="match status" value="1"/>
</dbReference>
<dbReference type="PIRSF" id="PIRSF003314">
    <property type="entry name" value="IPP_isomerase"/>
    <property type="match status" value="1"/>
</dbReference>
<dbReference type="SUPFAM" id="SSF51395">
    <property type="entry name" value="FMN-linked oxidoreductases"/>
    <property type="match status" value="1"/>
</dbReference>
<sequence length="349" mass="38353">MVRAKRKLDHIEYALSTGQSRTHGFHDIDFVHQSLPNSNYDTITCETKIGELSLSSPIFINAMTGGGGEKTLHINEQLAYVAKHHNLAMAVGSQMAALKDESEAASYKVIRKVNPNGIFFANLGSEATIEQAERAVDMIEANALQIHLNVIQELTMPEGDRDFTGVLQRIEKIVLNSKVPIIVKEVGFGMSKETMQQLVNVGVTAIDIGGQGGTNFAAVENERRQRMLSYFNNWGIQTATSIIEATSTNNNLSFIASGGIQTALDVAKAIALGANTTAFAGYFLRILMQDGIEKLLDEIELLHTDLKFIMTALGAKTIEELQSVPLVVKGETYHWLMQRGIDTAHYSRR</sequence>
<comment type="function">
    <text evidence="1">Involved in the biosynthesis of isoprenoids. Catalyzes the 1,3-allylic rearrangement of the homoallylic substrate isopentenyl (IPP) to its allylic isomer, dimethylallyl diphosphate (DMAPP).</text>
</comment>
<comment type="catalytic activity">
    <reaction evidence="1">
        <text>isopentenyl diphosphate = dimethylallyl diphosphate</text>
        <dbReference type="Rhea" id="RHEA:23284"/>
        <dbReference type="ChEBI" id="CHEBI:57623"/>
        <dbReference type="ChEBI" id="CHEBI:128769"/>
        <dbReference type="EC" id="5.3.3.2"/>
    </reaction>
</comment>
<comment type="cofactor">
    <cofactor evidence="1">
        <name>FMN</name>
        <dbReference type="ChEBI" id="CHEBI:58210"/>
    </cofactor>
</comment>
<comment type="cofactor">
    <cofactor evidence="1">
        <name>NADPH</name>
        <dbReference type="ChEBI" id="CHEBI:57783"/>
    </cofactor>
</comment>
<comment type="cofactor">
    <cofactor evidence="1">
        <name>Mg(2+)</name>
        <dbReference type="ChEBI" id="CHEBI:18420"/>
    </cofactor>
</comment>
<comment type="subunit">
    <text evidence="1">Homooctamer. Dimer of tetramers.</text>
</comment>
<comment type="subcellular location">
    <subcellularLocation>
        <location evidence="1">Cytoplasm</location>
    </subcellularLocation>
</comment>
<comment type="similarity">
    <text evidence="1">Belongs to the IPP isomerase type 2 family.</text>
</comment>
<evidence type="ECO:0000255" key="1">
    <source>
        <dbReference type="HAMAP-Rule" id="MF_00354"/>
    </source>
</evidence>
<gene>
    <name evidence="1" type="primary">fni</name>
    <name type="ordered locus">BCB4264_A1554</name>
</gene>
<accession>B7HHQ2</accession>
<proteinExistence type="inferred from homology"/>
<feature type="chain" id="PRO_1000120539" description="Isopentenyl-diphosphate delta-isomerase">
    <location>
        <begin position="1"/>
        <end position="349"/>
    </location>
</feature>
<feature type="binding site" evidence="1">
    <location>
        <begin position="6"/>
        <end position="7"/>
    </location>
    <ligand>
        <name>substrate</name>
    </ligand>
</feature>
<feature type="binding site" evidence="1">
    <location>
        <begin position="62"/>
        <end position="64"/>
    </location>
    <ligand>
        <name>FMN</name>
        <dbReference type="ChEBI" id="CHEBI:58210"/>
    </ligand>
</feature>
<feature type="binding site" evidence="1">
    <location>
        <position position="93"/>
    </location>
    <ligand>
        <name>FMN</name>
        <dbReference type="ChEBI" id="CHEBI:58210"/>
    </ligand>
</feature>
<feature type="binding site" evidence="1">
    <location>
        <position position="122"/>
    </location>
    <ligand>
        <name>FMN</name>
        <dbReference type="ChEBI" id="CHEBI:58210"/>
    </ligand>
</feature>
<feature type="binding site" evidence="1">
    <location>
        <position position="152"/>
    </location>
    <ligand>
        <name>substrate</name>
    </ligand>
</feature>
<feature type="binding site" evidence="1">
    <location>
        <position position="153"/>
    </location>
    <ligand>
        <name>Mg(2+)</name>
        <dbReference type="ChEBI" id="CHEBI:18420"/>
    </ligand>
</feature>
<feature type="binding site" evidence="1">
    <location>
        <position position="184"/>
    </location>
    <ligand>
        <name>FMN</name>
        <dbReference type="ChEBI" id="CHEBI:58210"/>
    </ligand>
</feature>
<feature type="binding site" evidence="1">
    <location>
        <position position="214"/>
    </location>
    <ligand>
        <name>FMN</name>
        <dbReference type="ChEBI" id="CHEBI:58210"/>
    </ligand>
</feature>
<feature type="binding site" evidence="1">
    <location>
        <begin position="258"/>
        <end position="259"/>
    </location>
    <ligand>
        <name>FMN</name>
        <dbReference type="ChEBI" id="CHEBI:58210"/>
    </ligand>
</feature>
<feature type="binding site" evidence="1">
    <location>
        <begin position="280"/>
        <end position="281"/>
    </location>
    <ligand>
        <name>FMN</name>
        <dbReference type="ChEBI" id="CHEBI:58210"/>
    </ligand>
</feature>
<name>IDI2_BACC4</name>